<evidence type="ECO:0000255" key="1">
    <source>
        <dbReference type="HAMAP-Rule" id="MF_00914"/>
    </source>
</evidence>
<evidence type="ECO:0000305" key="2"/>
<protein>
    <recommendedName>
        <fullName evidence="1">L-alanine exporter AlaE</fullName>
    </recommendedName>
</protein>
<feature type="chain" id="PRO_0000415619" description="L-alanine exporter AlaE">
    <location>
        <begin position="1"/>
        <end position="149"/>
    </location>
</feature>
<feature type="transmembrane region" description="Helical" evidence="1">
    <location>
        <begin position="16"/>
        <end position="36"/>
    </location>
</feature>
<feature type="transmembrane region" description="Helical" evidence="1">
    <location>
        <begin position="46"/>
        <end position="66"/>
    </location>
</feature>
<feature type="transmembrane region" description="Helical" evidence="1">
    <location>
        <begin position="85"/>
        <end position="105"/>
    </location>
</feature>
<feature type="transmembrane region" description="Helical" evidence="1">
    <location>
        <begin position="112"/>
        <end position="132"/>
    </location>
</feature>
<name>ALAE_CITK8</name>
<dbReference type="EMBL" id="CP000822">
    <property type="protein sequence ID" value="ABV15089.1"/>
    <property type="status" value="ALT_INIT"/>
    <property type="molecule type" value="Genomic_DNA"/>
</dbReference>
<dbReference type="RefSeq" id="WP_024130879.1">
    <property type="nucleotide sequence ID" value="NC_009792.1"/>
</dbReference>
<dbReference type="STRING" id="290338.CKO_04017"/>
<dbReference type="TCDB" id="2.A.104.1.1">
    <property type="family name" value="the l-alanine exporter (alae) family"/>
</dbReference>
<dbReference type="GeneID" id="45137662"/>
<dbReference type="KEGG" id="cko:CKO_04017"/>
<dbReference type="HOGENOM" id="CLU_126493_0_0_6"/>
<dbReference type="OrthoDB" id="9006207at2"/>
<dbReference type="Proteomes" id="UP000008148">
    <property type="component" value="Chromosome"/>
</dbReference>
<dbReference type="GO" id="GO:0005886">
    <property type="term" value="C:plasma membrane"/>
    <property type="evidence" value="ECO:0007669"/>
    <property type="project" value="UniProtKB-SubCell"/>
</dbReference>
<dbReference type="GO" id="GO:0034639">
    <property type="term" value="F:L-amino acid efflux transmembrane transporter activity"/>
    <property type="evidence" value="ECO:0007669"/>
    <property type="project" value="UniProtKB-UniRule"/>
</dbReference>
<dbReference type="GO" id="GO:0032973">
    <property type="term" value="P:amino acid export across plasma membrane"/>
    <property type="evidence" value="ECO:0007669"/>
    <property type="project" value="UniProtKB-UniRule"/>
</dbReference>
<dbReference type="HAMAP" id="MF_00914">
    <property type="entry name" value="L_Ala_exporter"/>
    <property type="match status" value="1"/>
</dbReference>
<dbReference type="InterPro" id="IPR010574">
    <property type="entry name" value="Ala_export_AlaE"/>
</dbReference>
<dbReference type="Pfam" id="PF06610">
    <property type="entry name" value="AlaE"/>
    <property type="match status" value="1"/>
</dbReference>
<comment type="function">
    <text evidence="1">Exports L-alanine.</text>
</comment>
<comment type="subcellular location">
    <subcellularLocation>
        <location evidence="1">Cell inner membrane</location>
        <topology evidence="1">Multi-pass membrane protein</topology>
    </subcellularLocation>
</comment>
<comment type="similarity">
    <text evidence="1">Belongs to the AlaE exporter family.</text>
</comment>
<comment type="sequence caution" evidence="2">
    <conflict type="erroneous initiation">
        <sequence resource="EMBL-CDS" id="ABV15089"/>
    </conflict>
    <text>Extended N-terminus.</text>
</comment>
<keyword id="KW-0029">Amino-acid transport</keyword>
<keyword id="KW-0997">Cell inner membrane</keyword>
<keyword id="KW-1003">Cell membrane</keyword>
<keyword id="KW-0472">Membrane</keyword>
<keyword id="KW-1185">Reference proteome</keyword>
<keyword id="KW-0812">Transmembrane</keyword>
<keyword id="KW-1133">Transmembrane helix</keyword>
<keyword id="KW-0813">Transport</keyword>
<accession>A8ANM6</accession>
<organism>
    <name type="scientific">Citrobacter koseri (strain ATCC BAA-895 / CDC 4225-83 / SGSC4696)</name>
    <dbReference type="NCBI Taxonomy" id="290338"/>
    <lineage>
        <taxon>Bacteria</taxon>
        <taxon>Pseudomonadati</taxon>
        <taxon>Pseudomonadota</taxon>
        <taxon>Gammaproteobacteria</taxon>
        <taxon>Enterobacterales</taxon>
        <taxon>Enterobacteriaceae</taxon>
        <taxon>Citrobacter</taxon>
    </lineage>
</organism>
<reference key="1">
    <citation type="submission" date="2007-08" db="EMBL/GenBank/DDBJ databases">
        <authorList>
            <consortium name="The Citrobacter koseri Genome Sequencing Project"/>
            <person name="McClelland M."/>
            <person name="Sanderson E.K."/>
            <person name="Porwollik S."/>
            <person name="Spieth J."/>
            <person name="Clifton W.S."/>
            <person name="Latreille P."/>
            <person name="Courtney L."/>
            <person name="Wang C."/>
            <person name="Pepin K."/>
            <person name="Bhonagiri V."/>
            <person name="Nash W."/>
            <person name="Johnson M."/>
            <person name="Thiruvilangam P."/>
            <person name="Wilson R."/>
        </authorList>
    </citation>
    <scope>NUCLEOTIDE SEQUENCE [LARGE SCALE GENOMIC DNA]</scope>
    <source>
        <strain>ATCC BAA-895 / CDC 4225-83 / SGSC4696</strain>
    </source>
</reference>
<proteinExistence type="inferred from homology"/>
<sequence>MFSPQSRLRHAVADTFAMVVYCSVVNMLIEIFLSGMTFEQSLSSRLVAIPVNILIAWPYGMYRDAIMRVARKASPASWVKNLADVLAYVTFQSPVYVAILLTVGADWHQITAAVSSNIVISMLMGAVYGYFLDYCRRLFKVSSYHQAKA</sequence>
<gene>
    <name evidence="1" type="primary">alaE</name>
    <name type="ordered locus">CKO_04017</name>
</gene>